<name>RL16_BIFLO</name>
<gene>
    <name evidence="1" type="primary">rplP</name>
    <name type="ordered locus">BL1586</name>
</gene>
<proteinExistence type="inferred from homology"/>
<organism>
    <name type="scientific">Bifidobacterium longum (strain NCC 2705)</name>
    <dbReference type="NCBI Taxonomy" id="206672"/>
    <lineage>
        <taxon>Bacteria</taxon>
        <taxon>Bacillati</taxon>
        <taxon>Actinomycetota</taxon>
        <taxon>Actinomycetes</taxon>
        <taxon>Bifidobacteriales</taxon>
        <taxon>Bifidobacteriaceae</taxon>
        <taxon>Bifidobacterium</taxon>
    </lineage>
</organism>
<accession>Q8G411</accession>
<reference key="1">
    <citation type="journal article" date="2002" name="Proc. Natl. Acad. Sci. U.S.A.">
        <title>The genome sequence of Bifidobacterium longum reflects its adaptation to the human gastrointestinal tract.</title>
        <authorList>
            <person name="Schell M.A."/>
            <person name="Karmirantzou M."/>
            <person name="Snel B."/>
            <person name="Vilanova D."/>
            <person name="Berger B."/>
            <person name="Pessi G."/>
            <person name="Zwahlen M.-C."/>
            <person name="Desiere F."/>
            <person name="Bork P."/>
            <person name="Delley M."/>
            <person name="Pridmore R.D."/>
            <person name="Arigoni F."/>
        </authorList>
    </citation>
    <scope>NUCLEOTIDE SEQUENCE [LARGE SCALE GENOMIC DNA]</scope>
    <source>
        <strain>NCC 2705</strain>
    </source>
</reference>
<feature type="chain" id="PRO_0000062051" description="Large ribosomal subunit protein uL16">
    <location>
        <begin position="1"/>
        <end position="139"/>
    </location>
</feature>
<feature type="region of interest" description="Disordered" evidence="2">
    <location>
        <begin position="1"/>
        <end position="22"/>
    </location>
</feature>
<feature type="compositionally biased region" description="Basic residues" evidence="2">
    <location>
        <begin position="1"/>
        <end position="16"/>
    </location>
</feature>
<keyword id="KW-1185">Reference proteome</keyword>
<keyword id="KW-0687">Ribonucleoprotein</keyword>
<keyword id="KW-0689">Ribosomal protein</keyword>
<keyword id="KW-0694">RNA-binding</keyword>
<keyword id="KW-0699">rRNA-binding</keyword>
<keyword id="KW-0820">tRNA-binding</keyword>
<evidence type="ECO:0000255" key="1">
    <source>
        <dbReference type="HAMAP-Rule" id="MF_01342"/>
    </source>
</evidence>
<evidence type="ECO:0000256" key="2">
    <source>
        <dbReference type="SAM" id="MobiDB-lite"/>
    </source>
</evidence>
<evidence type="ECO:0000305" key="3"/>
<dbReference type="EMBL" id="AE014295">
    <property type="protein sequence ID" value="AAN25376.1"/>
    <property type="molecule type" value="Genomic_DNA"/>
</dbReference>
<dbReference type="RefSeq" id="NP_696740.1">
    <property type="nucleotide sequence ID" value="NC_004307.2"/>
</dbReference>
<dbReference type="RefSeq" id="WP_007053037.1">
    <property type="nucleotide sequence ID" value="NC_004307.2"/>
</dbReference>
<dbReference type="SMR" id="Q8G411"/>
<dbReference type="STRING" id="206672.BL1586"/>
<dbReference type="EnsemblBacteria" id="AAN25376">
    <property type="protein sequence ID" value="AAN25376"/>
    <property type="gene ID" value="BL1586"/>
</dbReference>
<dbReference type="GeneID" id="69578890"/>
<dbReference type="KEGG" id="blo:BL1586"/>
<dbReference type="PATRIC" id="fig|206672.9.peg.1642"/>
<dbReference type="HOGENOM" id="CLU_078858_2_1_11"/>
<dbReference type="OrthoDB" id="9802589at2"/>
<dbReference type="PhylomeDB" id="Q8G411"/>
<dbReference type="Proteomes" id="UP000000439">
    <property type="component" value="Chromosome"/>
</dbReference>
<dbReference type="GO" id="GO:0022625">
    <property type="term" value="C:cytosolic large ribosomal subunit"/>
    <property type="evidence" value="ECO:0007669"/>
    <property type="project" value="TreeGrafter"/>
</dbReference>
<dbReference type="GO" id="GO:0019843">
    <property type="term" value="F:rRNA binding"/>
    <property type="evidence" value="ECO:0007669"/>
    <property type="project" value="UniProtKB-UniRule"/>
</dbReference>
<dbReference type="GO" id="GO:0003735">
    <property type="term" value="F:structural constituent of ribosome"/>
    <property type="evidence" value="ECO:0007669"/>
    <property type="project" value="InterPro"/>
</dbReference>
<dbReference type="GO" id="GO:0000049">
    <property type="term" value="F:tRNA binding"/>
    <property type="evidence" value="ECO:0007669"/>
    <property type="project" value="UniProtKB-KW"/>
</dbReference>
<dbReference type="GO" id="GO:0006412">
    <property type="term" value="P:translation"/>
    <property type="evidence" value="ECO:0007669"/>
    <property type="project" value="UniProtKB-UniRule"/>
</dbReference>
<dbReference type="CDD" id="cd01433">
    <property type="entry name" value="Ribosomal_L16_L10e"/>
    <property type="match status" value="1"/>
</dbReference>
<dbReference type="FunFam" id="3.90.1170.10:FF:000001">
    <property type="entry name" value="50S ribosomal protein L16"/>
    <property type="match status" value="1"/>
</dbReference>
<dbReference type="Gene3D" id="3.90.1170.10">
    <property type="entry name" value="Ribosomal protein L10e/L16"/>
    <property type="match status" value="1"/>
</dbReference>
<dbReference type="HAMAP" id="MF_01342">
    <property type="entry name" value="Ribosomal_uL16"/>
    <property type="match status" value="1"/>
</dbReference>
<dbReference type="InterPro" id="IPR047873">
    <property type="entry name" value="Ribosomal_uL16"/>
</dbReference>
<dbReference type="InterPro" id="IPR000114">
    <property type="entry name" value="Ribosomal_uL16_bact-type"/>
</dbReference>
<dbReference type="InterPro" id="IPR020798">
    <property type="entry name" value="Ribosomal_uL16_CS"/>
</dbReference>
<dbReference type="InterPro" id="IPR016180">
    <property type="entry name" value="Ribosomal_uL16_dom"/>
</dbReference>
<dbReference type="InterPro" id="IPR036920">
    <property type="entry name" value="Ribosomal_uL16_sf"/>
</dbReference>
<dbReference type="NCBIfam" id="TIGR01164">
    <property type="entry name" value="rplP_bact"/>
    <property type="match status" value="1"/>
</dbReference>
<dbReference type="PANTHER" id="PTHR12220">
    <property type="entry name" value="50S/60S RIBOSOMAL PROTEIN L16"/>
    <property type="match status" value="1"/>
</dbReference>
<dbReference type="PANTHER" id="PTHR12220:SF13">
    <property type="entry name" value="LARGE RIBOSOMAL SUBUNIT PROTEIN UL16M"/>
    <property type="match status" value="1"/>
</dbReference>
<dbReference type="Pfam" id="PF00252">
    <property type="entry name" value="Ribosomal_L16"/>
    <property type="match status" value="1"/>
</dbReference>
<dbReference type="PRINTS" id="PR00060">
    <property type="entry name" value="RIBOSOMALL16"/>
</dbReference>
<dbReference type="SUPFAM" id="SSF54686">
    <property type="entry name" value="Ribosomal protein L16p/L10e"/>
    <property type="match status" value="1"/>
</dbReference>
<dbReference type="PROSITE" id="PS00701">
    <property type="entry name" value="RIBOSOMAL_L16_2"/>
    <property type="match status" value="1"/>
</dbReference>
<comment type="function">
    <text evidence="1">Binds 23S rRNA and is also seen to make contacts with the A and possibly P site tRNAs.</text>
</comment>
<comment type="subunit">
    <text evidence="1">Part of the 50S ribosomal subunit.</text>
</comment>
<comment type="similarity">
    <text evidence="1">Belongs to the universal ribosomal protein uL16 family.</text>
</comment>
<sequence>MLIPKRTKYRKQHRPVRSGMSKGGNEINFGDFAIQSLAPAYVTNRQIEAARIAMTRYIKRGGRVWITIFPDRPLTKHPLGARMGSGKGAPEFWIANVRPGRVMFEIGGVSEDIAKEALRRAIDKLPMKCRIIAREGGDI</sequence>
<protein>
    <recommendedName>
        <fullName evidence="1">Large ribosomal subunit protein uL16</fullName>
    </recommendedName>
    <alternativeName>
        <fullName evidence="3">50S ribosomal protein L16</fullName>
    </alternativeName>
</protein>